<feature type="chain" id="PRO_0000257454" description="tRNA (guanine-N(1)-)-methyltransferase">
    <location>
        <begin position="1"/>
        <end position="260"/>
    </location>
</feature>
<feature type="binding site" evidence="1">
    <location>
        <position position="117"/>
    </location>
    <ligand>
        <name>S-adenosyl-L-methionine</name>
        <dbReference type="ChEBI" id="CHEBI:59789"/>
    </ligand>
</feature>
<feature type="binding site" evidence="1">
    <location>
        <begin position="137"/>
        <end position="142"/>
    </location>
    <ligand>
        <name>S-adenosyl-L-methionine</name>
        <dbReference type="ChEBI" id="CHEBI:59789"/>
    </ligand>
</feature>
<gene>
    <name evidence="1" type="primary">trmD</name>
    <name type="ordered locus">Rmet_0750</name>
</gene>
<reference key="1">
    <citation type="journal article" date="2010" name="PLoS ONE">
        <title>The complete genome sequence of Cupriavidus metallidurans strain CH34, a master survivalist in harsh and anthropogenic environments.</title>
        <authorList>
            <person name="Janssen P.J."/>
            <person name="Van Houdt R."/>
            <person name="Moors H."/>
            <person name="Monsieurs P."/>
            <person name="Morin N."/>
            <person name="Michaux A."/>
            <person name="Benotmane M.A."/>
            <person name="Leys N."/>
            <person name="Vallaeys T."/>
            <person name="Lapidus A."/>
            <person name="Monchy S."/>
            <person name="Medigue C."/>
            <person name="Taghavi S."/>
            <person name="McCorkle S."/>
            <person name="Dunn J."/>
            <person name="van der Lelie D."/>
            <person name="Mergeay M."/>
        </authorList>
    </citation>
    <scope>NUCLEOTIDE SEQUENCE [LARGE SCALE GENOMIC DNA]</scope>
    <source>
        <strain>ATCC 43123 / DSM 2839 / NBRC 102507 / CH34</strain>
    </source>
</reference>
<keyword id="KW-0963">Cytoplasm</keyword>
<keyword id="KW-0489">Methyltransferase</keyword>
<keyword id="KW-1185">Reference proteome</keyword>
<keyword id="KW-0949">S-adenosyl-L-methionine</keyword>
<keyword id="KW-0808">Transferase</keyword>
<keyword id="KW-0819">tRNA processing</keyword>
<sequence>MQFDVITLFPEMFRALTDWGITSRAAKQQRYALRTWNPRDFTVDNYRTIDDRPYGGGPGMVMLAKPLEDAIDAAAAAQSDAGVGRPHVVLMSPQGATLTHEKVMALSQRPGLVLLCGRYEAIDQRLIDRRVDEEISLGDFVLSGGELPAMALIDAVVRHLPGVLGDAQSAVQDSFVNGLLDCPHYTRPEEYEGVRVPDVLLGGHHAEIEKWRRRQALANTARKRPDLIVAAREQGLLSKADEKFLSELAAKAGQEFAPAK</sequence>
<protein>
    <recommendedName>
        <fullName evidence="1">tRNA (guanine-N(1)-)-methyltransferase</fullName>
        <ecNumber evidence="1">2.1.1.228</ecNumber>
    </recommendedName>
    <alternativeName>
        <fullName evidence="1">M1G-methyltransferase</fullName>
    </alternativeName>
    <alternativeName>
        <fullName evidence="1">tRNA [GM37] methyltransferase</fullName>
    </alternativeName>
</protein>
<proteinExistence type="inferred from homology"/>
<evidence type="ECO:0000255" key="1">
    <source>
        <dbReference type="HAMAP-Rule" id="MF_00605"/>
    </source>
</evidence>
<organism>
    <name type="scientific">Cupriavidus metallidurans (strain ATCC 43123 / DSM 2839 / NBRC 102507 / CH34)</name>
    <name type="common">Ralstonia metallidurans</name>
    <dbReference type="NCBI Taxonomy" id="266264"/>
    <lineage>
        <taxon>Bacteria</taxon>
        <taxon>Pseudomonadati</taxon>
        <taxon>Pseudomonadota</taxon>
        <taxon>Betaproteobacteria</taxon>
        <taxon>Burkholderiales</taxon>
        <taxon>Burkholderiaceae</taxon>
        <taxon>Cupriavidus</taxon>
    </lineage>
</organism>
<comment type="function">
    <text evidence="1">Specifically methylates guanosine-37 in various tRNAs.</text>
</comment>
<comment type="catalytic activity">
    <reaction evidence="1">
        <text>guanosine(37) in tRNA + S-adenosyl-L-methionine = N(1)-methylguanosine(37) in tRNA + S-adenosyl-L-homocysteine + H(+)</text>
        <dbReference type="Rhea" id="RHEA:36899"/>
        <dbReference type="Rhea" id="RHEA-COMP:10145"/>
        <dbReference type="Rhea" id="RHEA-COMP:10147"/>
        <dbReference type="ChEBI" id="CHEBI:15378"/>
        <dbReference type="ChEBI" id="CHEBI:57856"/>
        <dbReference type="ChEBI" id="CHEBI:59789"/>
        <dbReference type="ChEBI" id="CHEBI:73542"/>
        <dbReference type="ChEBI" id="CHEBI:74269"/>
        <dbReference type="EC" id="2.1.1.228"/>
    </reaction>
</comment>
<comment type="subunit">
    <text evidence="1">Homodimer.</text>
</comment>
<comment type="subcellular location">
    <subcellularLocation>
        <location evidence="1">Cytoplasm</location>
    </subcellularLocation>
</comment>
<comment type="similarity">
    <text evidence="1">Belongs to the RNA methyltransferase TrmD family.</text>
</comment>
<accession>Q1LQE0</accession>
<dbReference type="EC" id="2.1.1.228" evidence="1"/>
<dbReference type="EMBL" id="CP000352">
    <property type="protein sequence ID" value="ABF07636.1"/>
    <property type="molecule type" value="Genomic_DNA"/>
</dbReference>
<dbReference type="RefSeq" id="WP_011515592.1">
    <property type="nucleotide sequence ID" value="NC_007973.1"/>
</dbReference>
<dbReference type="SMR" id="Q1LQE0"/>
<dbReference type="STRING" id="266264.Rmet_0750"/>
<dbReference type="KEGG" id="rme:Rmet_0750"/>
<dbReference type="eggNOG" id="COG0336">
    <property type="taxonomic scope" value="Bacteria"/>
</dbReference>
<dbReference type="HOGENOM" id="CLU_047363_0_2_4"/>
<dbReference type="Proteomes" id="UP000002429">
    <property type="component" value="Chromosome"/>
</dbReference>
<dbReference type="GO" id="GO:0005829">
    <property type="term" value="C:cytosol"/>
    <property type="evidence" value="ECO:0007669"/>
    <property type="project" value="TreeGrafter"/>
</dbReference>
<dbReference type="GO" id="GO:0052906">
    <property type="term" value="F:tRNA (guanine(37)-N1)-methyltransferase activity"/>
    <property type="evidence" value="ECO:0007669"/>
    <property type="project" value="UniProtKB-UniRule"/>
</dbReference>
<dbReference type="GO" id="GO:0002939">
    <property type="term" value="P:tRNA N1-guanine methylation"/>
    <property type="evidence" value="ECO:0007669"/>
    <property type="project" value="TreeGrafter"/>
</dbReference>
<dbReference type="CDD" id="cd18080">
    <property type="entry name" value="TrmD-like"/>
    <property type="match status" value="1"/>
</dbReference>
<dbReference type="FunFam" id="1.10.1270.20:FF:000001">
    <property type="entry name" value="tRNA (guanine-N(1)-)-methyltransferase"/>
    <property type="match status" value="1"/>
</dbReference>
<dbReference type="FunFam" id="3.40.1280.10:FF:000001">
    <property type="entry name" value="tRNA (guanine-N(1)-)-methyltransferase"/>
    <property type="match status" value="1"/>
</dbReference>
<dbReference type="Gene3D" id="3.40.1280.10">
    <property type="match status" value="1"/>
</dbReference>
<dbReference type="Gene3D" id="1.10.1270.20">
    <property type="entry name" value="tRNA(m1g37)methyltransferase, domain 2"/>
    <property type="match status" value="1"/>
</dbReference>
<dbReference type="HAMAP" id="MF_00605">
    <property type="entry name" value="TrmD"/>
    <property type="match status" value="1"/>
</dbReference>
<dbReference type="InterPro" id="IPR029028">
    <property type="entry name" value="Alpha/beta_knot_MTases"/>
</dbReference>
<dbReference type="InterPro" id="IPR023148">
    <property type="entry name" value="tRNA_m1G_MeTrfase_C_sf"/>
</dbReference>
<dbReference type="InterPro" id="IPR002649">
    <property type="entry name" value="tRNA_m1G_MeTrfase_TrmD"/>
</dbReference>
<dbReference type="InterPro" id="IPR029026">
    <property type="entry name" value="tRNA_m1G_MTases_N"/>
</dbReference>
<dbReference type="InterPro" id="IPR016009">
    <property type="entry name" value="tRNA_MeTrfase_TRMD/TRM10"/>
</dbReference>
<dbReference type="NCBIfam" id="NF000648">
    <property type="entry name" value="PRK00026.1"/>
    <property type="match status" value="1"/>
</dbReference>
<dbReference type="NCBIfam" id="TIGR00088">
    <property type="entry name" value="trmD"/>
    <property type="match status" value="1"/>
</dbReference>
<dbReference type="PANTHER" id="PTHR46417">
    <property type="entry name" value="TRNA (GUANINE-N(1)-)-METHYLTRANSFERASE"/>
    <property type="match status" value="1"/>
</dbReference>
<dbReference type="PANTHER" id="PTHR46417:SF1">
    <property type="entry name" value="TRNA (GUANINE-N(1)-)-METHYLTRANSFERASE"/>
    <property type="match status" value="1"/>
</dbReference>
<dbReference type="Pfam" id="PF01746">
    <property type="entry name" value="tRNA_m1G_MT"/>
    <property type="match status" value="1"/>
</dbReference>
<dbReference type="PIRSF" id="PIRSF000386">
    <property type="entry name" value="tRNA_mtase"/>
    <property type="match status" value="1"/>
</dbReference>
<dbReference type="SUPFAM" id="SSF75217">
    <property type="entry name" value="alpha/beta knot"/>
    <property type="match status" value="1"/>
</dbReference>
<name>TRMD_CUPMC</name>